<comment type="function">
    <text evidence="1">Carrier protein involved in the D-alanylation of lipoteichoic acid (LTA). The loading of thioester-linked D-alanine onto DltC is catalyzed by D-alanine--D-alanyl carrier protein ligase DltA. The DltC-carried D-alanyl group is further transferred to cell membrane phosphatidylglycerol (PG) by forming an ester bond, probably catalyzed by DltD. D-alanylation of LTA plays an important role in modulating the properties of the cell wall in Gram-positive bacteria, influencing the net charge of the cell wall.</text>
</comment>
<comment type="pathway">
    <text evidence="1">Cell wall biogenesis; lipoteichoic acid biosynthesis.</text>
</comment>
<comment type="subcellular location">
    <subcellularLocation>
        <location evidence="1">Cytoplasm</location>
    </subcellularLocation>
</comment>
<comment type="PTM">
    <text evidence="1">4'-phosphopantetheine is transferred from CoA to a specific serine of apo-DCP.</text>
</comment>
<comment type="similarity">
    <text evidence="1">Belongs to the DltC family.</text>
</comment>
<keyword id="KW-0961">Cell wall biogenesis/degradation</keyword>
<keyword id="KW-0963">Cytoplasm</keyword>
<keyword id="KW-0596">Phosphopantetheine</keyword>
<keyword id="KW-0597">Phosphoprotein</keyword>
<keyword id="KW-1185">Reference proteome</keyword>
<feature type="chain" id="PRO_0000213092" description="D-alanyl carrier protein 2">
    <location>
        <begin position="1"/>
        <end position="80"/>
    </location>
</feature>
<feature type="domain" description="Carrier" evidence="1">
    <location>
        <begin position="1"/>
        <end position="80"/>
    </location>
</feature>
<feature type="modified residue" description="O-(pantetheine 4'-phosphoryl)serine" evidence="1">
    <location>
        <position position="38"/>
    </location>
</feature>
<organism>
    <name type="scientific">Lactiplantibacillus plantarum (strain ATCC BAA-793 / NCIMB 8826 / WCFS1)</name>
    <name type="common">Lactobacillus plantarum</name>
    <dbReference type="NCBI Taxonomy" id="220668"/>
    <lineage>
        <taxon>Bacteria</taxon>
        <taxon>Bacillati</taxon>
        <taxon>Bacillota</taxon>
        <taxon>Bacilli</taxon>
        <taxon>Lactobacillales</taxon>
        <taxon>Lactobacillaceae</taxon>
        <taxon>Lactiplantibacillus</taxon>
    </lineage>
</organism>
<proteinExistence type="inferred from homology"/>
<reference key="1">
    <citation type="journal article" date="2003" name="Proc. Natl. Acad. Sci. U.S.A.">
        <title>Complete genome sequence of Lactobacillus plantarum WCFS1.</title>
        <authorList>
            <person name="Kleerebezem M."/>
            <person name="Boekhorst J."/>
            <person name="van Kranenburg R."/>
            <person name="Molenaar D."/>
            <person name="Kuipers O.P."/>
            <person name="Leer R."/>
            <person name="Tarchini R."/>
            <person name="Peters S.A."/>
            <person name="Sandbrink H.M."/>
            <person name="Fiers M.W.E.J."/>
            <person name="Stiekema W."/>
            <person name="Klein Lankhorst R.M."/>
            <person name="Bron P.A."/>
            <person name="Hoffer S.M."/>
            <person name="Nierop Groot M.N."/>
            <person name="Kerkhoven R."/>
            <person name="De Vries M."/>
            <person name="Ursing B."/>
            <person name="De Vos W.M."/>
            <person name="Siezen R.J."/>
        </authorList>
    </citation>
    <scope>NUCLEOTIDE SEQUENCE [LARGE SCALE GENOMIC DNA]</scope>
    <source>
        <strain>ATCC BAA-793 / NCIMB 8826 / WCFS1</strain>
    </source>
</reference>
<reference key="2">
    <citation type="journal article" date="2012" name="J. Bacteriol.">
        <title>Complete resequencing and reannotation of the Lactobacillus plantarum WCFS1 genome.</title>
        <authorList>
            <person name="Siezen R.J."/>
            <person name="Francke C."/>
            <person name="Renckens B."/>
            <person name="Boekhorst J."/>
            <person name="Wels M."/>
            <person name="Kleerebezem M."/>
            <person name="van Hijum S.A."/>
        </authorList>
    </citation>
    <scope>NUCLEOTIDE SEQUENCE [LARGE SCALE GENOMIC DNA]</scope>
    <scope>GENOME REANNOTATION</scope>
    <source>
        <strain>ATCC BAA-793 / NCIMB 8826 / WCFS1</strain>
    </source>
</reference>
<dbReference type="EMBL" id="AL935263">
    <property type="protein sequence ID" value="CCC78747.1"/>
    <property type="molecule type" value="Genomic_DNA"/>
</dbReference>
<dbReference type="RefSeq" id="YP_004889261.1">
    <property type="nucleotide sequence ID" value="NC_004567.2"/>
</dbReference>
<dbReference type="SMR" id="Q88X40"/>
<dbReference type="STRING" id="220668.lp_1406"/>
<dbReference type="EnsemblBacteria" id="CCC78747">
    <property type="protein sequence ID" value="CCC78747"/>
    <property type="gene ID" value="lp_1406"/>
</dbReference>
<dbReference type="KEGG" id="lpl:lp_1406"/>
<dbReference type="PATRIC" id="fig|220668.9.peg.1179"/>
<dbReference type="eggNOG" id="COG0236">
    <property type="taxonomic scope" value="Bacteria"/>
</dbReference>
<dbReference type="HOGENOM" id="CLU_108696_19_0_9"/>
<dbReference type="OrthoDB" id="6462171at2"/>
<dbReference type="PhylomeDB" id="Q88X40"/>
<dbReference type="UniPathway" id="UPA00556"/>
<dbReference type="Proteomes" id="UP000000432">
    <property type="component" value="Chromosome"/>
</dbReference>
<dbReference type="GO" id="GO:0005737">
    <property type="term" value="C:cytoplasm"/>
    <property type="evidence" value="ECO:0007669"/>
    <property type="project" value="UniProtKB-SubCell"/>
</dbReference>
<dbReference type="GO" id="GO:0036370">
    <property type="term" value="F:D-alanyl carrier activity"/>
    <property type="evidence" value="ECO:0007669"/>
    <property type="project" value="UniProtKB-UniRule"/>
</dbReference>
<dbReference type="GO" id="GO:0071555">
    <property type="term" value="P:cell wall organization"/>
    <property type="evidence" value="ECO:0007669"/>
    <property type="project" value="UniProtKB-KW"/>
</dbReference>
<dbReference type="GO" id="GO:0070395">
    <property type="term" value="P:lipoteichoic acid biosynthetic process"/>
    <property type="evidence" value="ECO:0007669"/>
    <property type="project" value="UniProtKB-UniRule"/>
</dbReference>
<dbReference type="Gene3D" id="1.10.1200.10">
    <property type="entry name" value="ACP-like"/>
    <property type="match status" value="1"/>
</dbReference>
<dbReference type="HAMAP" id="MF_00565">
    <property type="entry name" value="DltC"/>
    <property type="match status" value="1"/>
</dbReference>
<dbReference type="InterPro" id="IPR036736">
    <property type="entry name" value="ACP-like_sf"/>
</dbReference>
<dbReference type="InterPro" id="IPR003230">
    <property type="entry name" value="DltC"/>
</dbReference>
<dbReference type="InterPro" id="IPR009081">
    <property type="entry name" value="PP-bd_ACP"/>
</dbReference>
<dbReference type="NCBIfam" id="TIGR01688">
    <property type="entry name" value="dltC"/>
    <property type="match status" value="1"/>
</dbReference>
<dbReference type="NCBIfam" id="NF003464">
    <property type="entry name" value="PRK05087.1"/>
    <property type="match status" value="1"/>
</dbReference>
<dbReference type="Pfam" id="PF00550">
    <property type="entry name" value="PP-binding"/>
    <property type="match status" value="1"/>
</dbReference>
<dbReference type="SUPFAM" id="SSF47336">
    <property type="entry name" value="ACP-like"/>
    <property type="match status" value="1"/>
</dbReference>
<dbReference type="PROSITE" id="PS50075">
    <property type="entry name" value="CARRIER"/>
    <property type="match status" value="1"/>
</dbReference>
<name>DLTC2_LACPL</name>
<sequence>MIMDDVKATVLSILQDLTGEDVSNNMDANLFDEGILDSMGSVQLLLELQNQLGIEVPVSEFERSEWETPAKIVAKVASLQ</sequence>
<protein>
    <recommendedName>
        <fullName evidence="1">D-alanyl carrier protein 2</fullName>
        <shortName evidence="1">DCP 2</shortName>
    </recommendedName>
    <alternativeName>
        <fullName evidence="1">D-alanine--poly(phosphoribitol) ligase subunit 2-2</fullName>
    </alternativeName>
</protein>
<accession>Q88X40</accession>
<accession>F9UNF8</accession>
<evidence type="ECO:0000255" key="1">
    <source>
        <dbReference type="HAMAP-Rule" id="MF_00565"/>
    </source>
</evidence>
<gene>
    <name evidence="1" type="primary">dltC2</name>
    <name type="ordered locus">lp_1406</name>
</gene>